<sequence length="239" mass="28299">MRIERVDDTTVKLFITYSDIEARGFSREDLWTNRKRGEEFFWSMMDEINEEEDFVVEGPLWIQVHAFEKGVEVTISKSKNEDMMNMSDDDATDQFDEQVQELLAQTLEGEDQLEELFEQRTKEKEAQGSKRQKSSARKNTRTIIVKFNDLEDVINYAYHSNPITTEFEDLLYMVDGTYYYAVHFDSHVDQEVINDSYSQLLEFAYPTDRTEVYLNDYAKIIMSHNVTAQVRRYFPETTE</sequence>
<feature type="chain" id="PRO_0000212279" description="Adapter protein MecA">
    <location>
        <begin position="1"/>
        <end position="239"/>
    </location>
</feature>
<feature type="region of interest" description="Disordered" evidence="2">
    <location>
        <begin position="118"/>
        <end position="137"/>
    </location>
</feature>
<feature type="compositionally biased region" description="Basic and acidic residues" evidence="2">
    <location>
        <begin position="118"/>
        <end position="128"/>
    </location>
</feature>
<gene>
    <name evidence="1" type="primary">mecA</name>
    <name type="ordered locus">SAR0966</name>
</gene>
<comment type="function">
    <text evidence="1">Enables the recognition and targeting of unfolded and aggregated proteins to the ClpC protease or to other proteins involved in proteolysis.</text>
</comment>
<comment type="subunit">
    <text evidence="1">Homodimer.</text>
</comment>
<comment type="domain">
    <text>The N-terminal domain probably binds unfolded/aggregated proteins; the C-terminal domain interacts with ClpC.</text>
</comment>
<comment type="similarity">
    <text evidence="1">Belongs to the MecA family.</text>
</comment>
<organism>
    <name type="scientific">Staphylococcus aureus (strain MRSA252)</name>
    <dbReference type="NCBI Taxonomy" id="282458"/>
    <lineage>
        <taxon>Bacteria</taxon>
        <taxon>Bacillati</taxon>
        <taxon>Bacillota</taxon>
        <taxon>Bacilli</taxon>
        <taxon>Bacillales</taxon>
        <taxon>Staphylococcaceae</taxon>
        <taxon>Staphylococcus</taxon>
    </lineage>
</organism>
<protein>
    <recommendedName>
        <fullName evidence="1">Adapter protein MecA</fullName>
    </recommendedName>
</protein>
<evidence type="ECO:0000255" key="1">
    <source>
        <dbReference type="HAMAP-Rule" id="MF_01124"/>
    </source>
</evidence>
<evidence type="ECO:0000256" key="2">
    <source>
        <dbReference type="SAM" id="MobiDB-lite"/>
    </source>
</evidence>
<reference key="1">
    <citation type="journal article" date="2004" name="Proc. Natl. Acad. Sci. U.S.A.">
        <title>Complete genomes of two clinical Staphylococcus aureus strains: evidence for the rapid evolution of virulence and drug resistance.</title>
        <authorList>
            <person name="Holden M.T.G."/>
            <person name="Feil E.J."/>
            <person name="Lindsay J.A."/>
            <person name="Peacock S.J."/>
            <person name="Day N.P.J."/>
            <person name="Enright M.C."/>
            <person name="Foster T.J."/>
            <person name="Moore C.E."/>
            <person name="Hurst L."/>
            <person name="Atkin R."/>
            <person name="Barron A."/>
            <person name="Bason N."/>
            <person name="Bentley S.D."/>
            <person name="Chillingworth C."/>
            <person name="Chillingworth T."/>
            <person name="Churcher C."/>
            <person name="Clark L."/>
            <person name="Corton C."/>
            <person name="Cronin A."/>
            <person name="Doggett J."/>
            <person name="Dowd L."/>
            <person name="Feltwell T."/>
            <person name="Hance Z."/>
            <person name="Harris B."/>
            <person name="Hauser H."/>
            <person name="Holroyd S."/>
            <person name="Jagels K."/>
            <person name="James K.D."/>
            <person name="Lennard N."/>
            <person name="Line A."/>
            <person name="Mayes R."/>
            <person name="Moule S."/>
            <person name="Mungall K."/>
            <person name="Ormond D."/>
            <person name="Quail M.A."/>
            <person name="Rabbinowitsch E."/>
            <person name="Rutherford K.M."/>
            <person name="Sanders M."/>
            <person name="Sharp S."/>
            <person name="Simmonds M."/>
            <person name="Stevens K."/>
            <person name="Whitehead S."/>
            <person name="Barrell B.G."/>
            <person name="Spratt B.G."/>
            <person name="Parkhill J."/>
        </authorList>
    </citation>
    <scope>NUCLEOTIDE SEQUENCE [LARGE SCALE GENOMIC DNA]</scope>
    <source>
        <strain>MRSA252</strain>
    </source>
</reference>
<proteinExistence type="inferred from homology"/>
<dbReference type="EMBL" id="BX571856">
    <property type="protein sequence ID" value="CAG39971.1"/>
    <property type="molecule type" value="Genomic_DNA"/>
</dbReference>
<dbReference type="RefSeq" id="WP_001217728.1">
    <property type="nucleotide sequence ID" value="NC_002952.2"/>
</dbReference>
<dbReference type="SMR" id="Q6GI87"/>
<dbReference type="GeneID" id="98345315"/>
<dbReference type="KEGG" id="sar:SAR0966"/>
<dbReference type="HOGENOM" id="CLU_071496_2_1_9"/>
<dbReference type="Proteomes" id="UP000000596">
    <property type="component" value="Chromosome"/>
</dbReference>
<dbReference type="GO" id="GO:0030674">
    <property type="term" value="F:protein-macromolecule adaptor activity"/>
    <property type="evidence" value="ECO:0007669"/>
    <property type="project" value="UniProtKB-UniRule"/>
</dbReference>
<dbReference type="Gene3D" id="3.30.70.1950">
    <property type="match status" value="1"/>
</dbReference>
<dbReference type="HAMAP" id="MF_01124">
    <property type="entry name" value="MecA"/>
    <property type="match status" value="1"/>
</dbReference>
<dbReference type="InterPro" id="IPR038471">
    <property type="entry name" value="MecA_C_sf"/>
</dbReference>
<dbReference type="InterPro" id="IPR008681">
    <property type="entry name" value="Neg-reg_MecA"/>
</dbReference>
<dbReference type="NCBIfam" id="NF002642">
    <property type="entry name" value="PRK02315.1-3"/>
    <property type="match status" value="1"/>
</dbReference>
<dbReference type="NCBIfam" id="NF002644">
    <property type="entry name" value="PRK02315.1-5"/>
    <property type="match status" value="1"/>
</dbReference>
<dbReference type="PANTHER" id="PTHR39161">
    <property type="entry name" value="ADAPTER PROTEIN MECA"/>
    <property type="match status" value="1"/>
</dbReference>
<dbReference type="PANTHER" id="PTHR39161:SF1">
    <property type="entry name" value="ADAPTER PROTEIN MECA 1"/>
    <property type="match status" value="1"/>
</dbReference>
<dbReference type="Pfam" id="PF05389">
    <property type="entry name" value="MecA"/>
    <property type="match status" value="1"/>
</dbReference>
<dbReference type="PIRSF" id="PIRSF029008">
    <property type="entry name" value="MecA"/>
    <property type="match status" value="1"/>
</dbReference>
<name>MECA_STAAR</name>
<accession>Q6GI87</accession>